<evidence type="ECO:0000250" key="1">
    <source>
        <dbReference type="UniProtKB" id="A0ZZH6"/>
    </source>
</evidence>
<evidence type="ECO:0000250" key="2">
    <source>
        <dbReference type="UniProtKB" id="D9TT09"/>
    </source>
</evidence>
<evidence type="ECO:0000269" key="3">
    <source>
    </source>
</evidence>
<evidence type="ECO:0000303" key="4">
    <source>
    </source>
</evidence>
<evidence type="ECO:0000305" key="5"/>
<evidence type="ECO:0000305" key="6">
    <source>
    </source>
</evidence>
<evidence type="ECO:0000312" key="7">
    <source>
        <dbReference type="EMBL" id="BAN03569.1"/>
    </source>
</evidence>
<evidence type="ECO:0007744" key="8">
    <source>
        <dbReference type="PDB" id="6S9U"/>
    </source>
</evidence>
<evidence type="ECO:0007829" key="9">
    <source>
        <dbReference type="PDB" id="6S9U"/>
    </source>
</evidence>
<gene>
    <name evidence="7" type="ORF">YM304_32550</name>
</gene>
<organism>
    <name type="scientific">Ilumatobacter coccineus (strain NBRC 103263 / KCTC 29153 / YM16-304)</name>
    <dbReference type="NCBI Taxonomy" id="1313172"/>
    <lineage>
        <taxon>Bacteria</taxon>
        <taxon>Bacillati</taxon>
        <taxon>Actinomycetota</taxon>
        <taxon>Acidimicrobiia</taxon>
        <taxon>Acidimicrobiales</taxon>
        <taxon>Ilumatobacteraceae</taxon>
        <taxon>Ilumatobacter</taxon>
    </lineage>
</organism>
<sequence>MTHAGMKASLPNRVMLNAYPDSIDGDLAGTVRMLQRPEFTDAFGLFYVLPSIFNSDLDRGFSIIDYDLNSDLASAEDLAALDELGIMLKFDMVLNHLSVGSPQFQDLLKHGDDSAFRDFFIDWNEFWEGEGELHADGHVVPSPEHLDRLFMRKPGLPILQVRFPDGSDRFYWNTFYQRVETIDGERSYLGQMDLNAESPRVWTFYRETFEKLARYGAKIVRLDAFAYLHKAVGDTNFFNTPGTWDHLDRLRTISEENGLVLLPEIHGEYGTKIHEELSDRDYPVYDFFFPGLVIDAIDSASNTHLLRWIDEIIERDIATVNMLGCHDGIPVIDLKGGPTGQGLLPDATIEAMISRLLERGGRVKNLYGADGTKVSYYQVNATFFSALGESDARLRLARAIQLFVPGTPQVWYLDLFAGANDVEAADRAGADGHKEINRTNLSAADVEAGLARPIVLDQLEMIRLRNASPAFDGRFEVVPTDDTRLQLRWQNGSTVALLDADLATERFTITHEHDGHTEILGYD</sequence>
<comment type="function">
    <text evidence="2 3">Catalyzes the reversible phosphorolysis of sucrose 6(F)-phosphate into alpha-D-glucose 1-phosphate (Glc1P) and D-fructose 6-phosphate (PubMed:31405215). May be involved in a new pathway for the degradation of sucrose, which could become phosphorylated on its fructose moiety during uptake via a PTS system (By similarity). Shows strict specificity since it does not catalyze reactions with alternative substrates (PubMed:31405215).</text>
</comment>
<comment type="catalytic activity">
    <reaction evidence="3">
        <text>sucrose 6(F)-phosphate + phosphate = beta-D-fructose 6-phosphate + alpha-D-glucose 1-phosphate</text>
        <dbReference type="Rhea" id="RHEA:38863"/>
        <dbReference type="ChEBI" id="CHEBI:43474"/>
        <dbReference type="ChEBI" id="CHEBI:57634"/>
        <dbReference type="ChEBI" id="CHEBI:57723"/>
        <dbReference type="ChEBI" id="CHEBI:58601"/>
        <dbReference type="EC" id="2.4.1.329"/>
    </reaction>
    <physiologicalReaction direction="left-to-right" evidence="6">
        <dbReference type="Rhea" id="RHEA:38864"/>
    </physiologicalReaction>
</comment>
<comment type="biophysicochemical properties">
    <kinetics>
        <KM evidence="3">7.8 mM for phosphate (at 35 degrees Celsius and pH 7)</KM>
        <KM evidence="6">11.3 mM for sucrose 6(F)-phosphate (at 35 degrees Celsius and pH 7)</KM>
        <KM evidence="6">2 mM for D-fructose 6-phosphate (at 35 degrees Celsius and pH 6.5)</KM>
        <KM evidence="6">18.8 mM for alpha-D-glucose 1-phosphate (at 35 degrees Celsius and pH 6.5)</KM>
        <text evidence="6">kcat is 126 sec(-1) for the phosphorolysis of sucrose 6(F)-phosphate (at 35 degrees Celsius and pH 7). kcat is 45 sec(-1) for the synthetic direction with alpha-D-glucose 1-phosphate and D-fructose 6-phosphate as substrates (at 35 degrees Celsius and pH 6.5).</text>
    </kinetics>
    <phDependence>
        <text evidence="3">Optimum pH is 6.5 in the synthesis direction, and more than 50% of the maximum activity is retained within the pH range of 5.5 to 8. In the phosphorolytic direction, the optimum is reached at pH 6.</text>
    </phDependence>
    <temperatureDependence>
        <text evidence="3">Optimum temperature is 35 degrees Celsius.</text>
    </temperatureDependence>
</comment>
<comment type="subunit">
    <text evidence="3">Monomer.</text>
</comment>
<comment type="similarity">
    <text evidence="5">Belongs to the glycosyl hydrolase 13 family. Sucrose phosphorylase subfamily.</text>
</comment>
<proteinExistence type="evidence at protein level"/>
<feature type="chain" id="PRO_0000450866" description="Sucrose 6(F)-phosphate phosphorylase">
    <location>
        <begin position="1"/>
        <end position="523"/>
    </location>
</feature>
<feature type="active site" description="Nucleophile" evidence="6">
    <location>
        <position position="223"/>
    </location>
</feature>
<feature type="active site" description="Proton donor/acceptor" evidence="6">
    <location>
        <position position="264"/>
    </location>
</feature>
<feature type="binding site" evidence="1">
    <location>
        <position position="58"/>
    </location>
    <ligand>
        <name>sucrose 6(F)-phosphate</name>
        <dbReference type="ChEBI" id="CHEBI:57723"/>
    </ligand>
</feature>
<feature type="binding site" evidence="1">
    <location>
        <position position="96"/>
    </location>
    <ligand>
        <name>sucrose 6(F)-phosphate</name>
        <dbReference type="ChEBI" id="CHEBI:57723"/>
    </ligand>
</feature>
<feature type="binding site" evidence="1">
    <location>
        <begin position="221"/>
        <end position="223"/>
    </location>
    <ligand>
        <name>sucrose 6(F)-phosphate</name>
        <dbReference type="ChEBI" id="CHEBI:57723"/>
    </ligand>
</feature>
<feature type="binding site" evidence="1">
    <location>
        <position position="264"/>
    </location>
    <ligand>
        <name>sucrose 6(F)-phosphate</name>
        <dbReference type="ChEBI" id="CHEBI:57723"/>
    </ligand>
</feature>
<feature type="binding site" evidence="1">
    <location>
        <begin position="326"/>
        <end position="327"/>
    </location>
    <ligand>
        <name>sucrose 6(F)-phosphate</name>
        <dbReference type="ChEBI" id="CHEBI:57723"/>
    </ligand>
</feature>
<feature type="binding site" evidence="1">
    <location>
        <position position="434"/>
    </location>
    <ligand>
        <name>sucrose 6(F)-phosphate</name>
        <dbReference type="ChEBI" id="CHEBI:57723"/>
    </ligand>
</feature>
<feature type="site" description="Transition state stabilizer" evidence="6">
    <location>
        <position position="327"/>
    </location>
</feature>
<feature type="mutagenesis site" description="28-fold decrease in catalytic activity in the synthesis direction, but only slight decrease in affinity for beta-D-fructose 6-phosphate. Gains some activity on fructose, glycerol, and D-glycerate." evidence="3">
    <original>R</original>
    <variation>A</variation>
    <location>
        <position position="152"/>
    </location>
</feature>
<feature type="mutagenesis site" description="65-fold decrease in catalytic activity in the synthesis direction, and 3-fold decrease in affinity for beta-D-fructose 6-phosphate. Gains some activity on fructose, glycerol, and D-glycerate." evidence="3">
    <original>K</original>
    <variation>S</variation>
    <location>
        <position position="364"/>
    </location>
</feature>
<feature type="mutagenesis site" description="50-fold decrease in catalytic activity in the synthesis direction, but only slight decrease in affinity for beta-D-fructose 6-phosphate." evidence="3">
    <original>Y</original>
    <variation>H</variation>
    <location>
        <position position="377"/>
    </location>
</feature>
<feature type="mutagenesis site" description="400-fold decrease in catalytic activity in the synthesis direction, and 17-fold decrease in affinity for beta-D-fructose 6-phosphate. Gains some activity on fructose and glycerol." evidence="3">
    <original>K</original>
    <variation>A</variation>
    <location>
        <position position="434"/>
    </location>
</feature>
<feature type="mutagenesis site" description="6-fold decrease in catalytic activity in the synthesis direction, and 5-fold decrease in affinity for beta-D-fructose 6-phosphate. Gains some activity on fructose and D-glycerate." evidence="3">
    <original>K</original>
    <variation>R</variation>
    <location>
        <position position="434"/>
    </location>
</feature>
<feature type="helix" evidence="9">
    <location>
        <begin position="6"/>
        <end position="9"/>
    </location>
</feature>
<feature type="strand" evidence="9">
    <location>
        <begin position="15"/>
        <end position="18"/>
    </location>
</feature>
<feature type="turn" evidence="9">
    <location>
        <begin position="20"/>
        <end position="22"/>
    </location>
</feature>
<feature type="helix" evidence="9">
    <location>
        <begin position="27"/>
        <end position="34"/>
    </location>
</feature>
<feature type="helix" evidence="9">
    <location>
        <begin position="37"/>
        <end position="39"/>
    </location>
</feature>
<feature type="strand" evidence="9">
    <location>
        <begin position="44"/>
        <end position="48"/>
    </location>
</feature>
<feature type="helix" evidence="9">
    <location>
        <begin position="50"/>
        <end position="52"/>
    </location>
</feature>
<feature type="strand" evidence="9">
    <location>
        <begin position="53"/>
        <end position="55"/>
    </location>
</feature>
<feature type="helix" evidence="9">
    <location>
        <begin position="58"/>
        <end position="60"/>
    </location>
</feature>
<feature type="strand" evidence="9">
    <location>
        <begin position="62"/>
        <end position="68"/>
    </location>
</feature>
<feature type="turn" evidence="9">
    <location>
        <begin position="70"/>
        <end position="72"/>
    </location>
</feature>
<feature type="helix" evidence="9">
    <location>
        <begin position="75"/>
        <end position="83"/>
    </location>
</feature>
<feature type="strand" evidence="9">
    <location>
        <begin position="87"/>
        <end position="92"/>
    </location>
</feature>
<feature type="strand" evidence="9">
    <location>
        <begin position="96"/>
        <end position="98"/>
    </location>
</feature>
<feature type="helix" evidence="9">
    <location>
        <begin position="102"/>
        <end position="110"/>
    </location>
</feature>
<feature type="helix" evidence="9">
    <location>
        <begin position="111"/>
        <end position="113"/>
    </location>
</feature>
<feature type="turn" evidence="9">
    <location>
        <begin position="115"/>
        <end position="119"/>
    </location>
</feature>
<feature type="helix" evidence="9">
    <location>
        <begin position="123"/>
        <end position="126"/>
    </location>
</feature>
<feature type="turn" evidence="9">
    <location>
        <begin position="127"/>
        <end position="129"/>
    </location>
</feature>
<feature type="strand" evidence="9">
    <location>
        <begin position="130"/>
        <end position="133"/>
    </location>
</feature>
<feature type="strand" evidence="9">
    <location>
        <begin position="139"/>
        <end position="141"/>
    </location>
</feature>
<feature type="helix" evidence="9">
    <location>
        <begin position="143"/>
        <end position="148"/>
    </location>
</feature>
<feature type="strand" evidence="9">
    <location>
        <begin position="152"/>
        <end position="155"/>
    </location>
</feature>
<feature type="strand" evidence="9">
    <location>
        <begin position="157"/>
        <end position="162"/>
    </location>
</feature>
<feature type="strand" evidence="9">
    <location>
        <begin position="168"/>
        <end position="172"/>
    </location>
</feature>
<feature type="strand" evidence="9">
    <location>
        <begin position="177"/>
        <end position="182"/>
    </location>
</feature>
<feature type="strand" evidence="9">
    <location>
        <begin position="185"/>
        <end position="194"/>
    </location>
</feature>
<feature type="helix" evidence="9">
    <location>
        <begin position="199"/>
        <end position="214"/>
    </location>
</feature>
<feature type="strand" evidence="9">
    <location>
        <begin position="217"/>
        <end position="222"/>
    </location>
</feature>
<feature type="helix" evidence="9">
    <location>
        <begin position="225"/>
        <end position="227"/>
    </location>
</feature>
<feature type="strand" evidence="9">
    <location>
        <begin position="236"/>
        <end position="238"/>
    </location>
</feature>
<feature type="helix" evidence="9">
    <location>
        <begin position="242"/>
        <end position="256"/>
    </location>
</feature>
<feature type="strand" evidence="9">
    <location>
        <begin position="260"/>
        <end position="263"/>
    </location>
</feature>
<feature type="helix" evidence="9">
    <location>
        <begin position="269"/>
        <end position="271"/>
    </location>
</feature>
<feature type="helix" evidence="9">
    <location>
        <begin position="273"/>
        <end position="279"/>
    </location>
</feature>
<feature type="helix" evidence="9">
    <location>
        <begin position="289"/>
        <end position="299"/>
    </location>
</feature>
<feature type="helix" evidence="9">
    <location>
        <begin position="303"/>
        <end position="314"/>
    </location>
</feature>
<feature type="strand" evidence="9">
    <location>
        <begin position="319"/>
        <end position="323"/>
    </location>
</feature>
<feature type="strand" evidence="9">
    <location>
        <begin position="329"/>
        <end position="331"/>
    </location>
</feature>
<feature type="helix" evidence="9">
    <location>
        <begin position="332"/>
        <end position="334"/>
    </location>
</feature>
<feature type="turn" evidence="9">
    <location>
        <begin position="337"/>
        <end position="339"/>
    </location>
</feature>
<feature type="helix" evidence="9">
    <location>
        <begin position="346"/>
        <end position="358"/>
    </location>
</feature>
<feature type="strand" evidence="9">
    <location>
        <begin position="362"/>
        <end position="367"/>
    </location>
</feature>
<feature type="strand" evidence="9">
    <location>
        <begin position="373"/>
        <end position="380"/>
    </location>
</feature>
<feature type="helix" evidence="9">
    <location>
        <begin position="383"/>
        <end position="386"/>
    </location>
</feature>
<feature type="helix" evidence="9">
    <location>
        <begin position="391"/>
        <end position="403"/>
    </location>
</feature>
<feature type="strand" evidence="9">
    <location>
        <begin position="404"/>
        <end position="411"/>
    </location>
</feature>
<feature type="helix" evidence="9">
    <location>
        <begin position="412"/>
        <end position="415"/>
    </location>
</feature>
<feature type="helix" evidence="9">
    <location>
        <begin position="422"/>
        <end position="426"/>
    </location>
</feature>
<feature type="helix" evidence="9">
    <location>
        <begin position="432"/>
        <end position="437"/>
    </location>
</feature>
<feature type="helix" evidence="9">
    <location>
        <begin position="443"/>
        <end position="449"/>
    </location>
</feature>
<feature type="helix" evidence="9">
    <location>
        <begin position="453"/>
        <end position="467"/>
    </location>
</feature>
<feature type="helix" evidence="9">
    <location>
        <begin position="469"/>
        <end position="472"/>
    </location>
</feature>
<feature type="strand" evidence="9">
    <location>
        <begin position="473"/>
        <end position="478"/>
    </location>
</feature>
<feature type="strand" evidence="9">
    <location>
        <begin position="484"/>
        <end position="491"/>
    </location>
</feature>
<feature type="strand" evidence="9">
    <location>
        <begin position="494"/>
        <end position="501"/>
    </location>
</feature>
<feature type="turn" evidence="9">
    <location>
        <begin position="502"/>
        <end position="505"/>
    </location>
</feature>
<feature type="strand" evidence="9">
    <location>
        <begin position="506"/>
        <end position="513"/>
    </location>
</feature>
<feature type="strand" evidence="9">
    <location>
        <begin position="516"/>
        <end position="522"/>
    </location>
</feature>
<accession>A0A6C7EEG6</accession>
<protein>
    <recommendedName>
        <fullName evidence="4">Sucrose 6(F)-phosphate phosphorylase</fullName>
        <shortName evidence="4">SPP</shortName>
        <ecNumber evidence="3">2.4.1.329</ecNumber>
    </recommendedName>
    <alternativeName>
        <fullName>Sucrose 6'-phosphate phosphorylase</fullName>
    </alternativeName>
</protein>
<name>SUCPP_ILUCY</name>
<reference key="1">
    <citation type="journal article" date="2013" name="Int. J. Syst. Evol. Microbiol.">
        <title>Ilumatobacter nonamiense sp. nov. and Ilumatobacter coccineum sp. nov., isolated from seashore sand.</title>
        <authorList>
            <person name="Matsumoto A."/>
            <person name="Kasai H."/>
            <person name="Matsuo Y."/>
            <person name="Shizuri Y."/>
            <person name="Ichikawa N."/>
            <person name="Fujita N."/>
            <person name="Omura S."/>
            <person name="Takahashi Y."/>
        </authorList>
    </citation>
    <scope>NUCLEOTIDE SEQUENCE [LARGE SCALE GENOMIC DNA]</scope>
    <source>
        <strain>NBRC 103263 / KCTC 29153 / YM16-304</strain>
    </source>
</reference>
<reference evidence="8" key="2">
    <citation type="journal article" date="2019" name="Int. J. Mol. Sci.">
        <title>Structural Comparison of a Promiscuous and a Highly Specific Sucrose 6F-Phosphate Phosphorylase.</title>
        <authorList>
            <person name="Franceus J."/>
            <person name="Capra N."/>
            <person name="Desmet T."/>
            <person name="Thunnissen A.W.H."/>
        </authorList>
    </citation>
    <scope>X-RAY CRYSTALLOGRAPHY (2.05 ANGSTROMS)</scope>
    <scope>FUNCTION</scope>
    <scope>CATALYTIC ACTIVITY</scope>
    <scope>SUBSTRATE SPECIFICITY</scope>
    <scope>BIOPHYSICOCHEMICAL PROPERTIES</scope>
    <scope>SUBUNIT</scope>
    <scope>ACTIVE SITE</scope>
    <scope>MUTAGENESIS OF ARG-152; LYS-364; TYR-377 AND LYS-434</scope>
    <source>
        <strain>NBRC 103263 / KCTC 29153 / YM16-304</strain>
    </source>
</reference>
<dbReference type="EC" id="2.4.1.329" evidence="3"/>
<dbReference type="EMBL" id="AP012057">
    <property type="protein sequence ID" value="BAN03569.1"/>
    <property type="molecule type" value="Genomic_DNA"/>
</dbReference>
<dbReference type="PDB" id="6S9U">
    <property type="method" value="X-ray"/>
    <property type="resolution" value="2.05 A"/>
    <property type="chains" value="A=1-523"/>
</dbReference>
<dbReference type="PDBsum" id="6S9U"/>
<dbReference type="SMR" id="A0A6C7EEG6"/>
<dbReference type="KEGG" id="aym:YM304_32550"/>
<dbReference type="BRENDA" id="2.4.1.329">
    <property type="organism ID" value="17579"/>
</dbReference>
<dbReference type="Proteomes" id="UP000011863">
    <property type="component" value="Chromosome"/>
</dbReference>
<dbReference type="GO" id="GO:0016757">
    <property type="term" value="F:glycosyltransferase activity"/>
    <property type="evidence" value="ECO:0007669"/>
    <property type="project" value="UniProtKB-KW"/>
</dbReference>
<dbReference type="Gene3D" id="3.20.20.80">
    <property type="entry name" value="Glycosidases"/>
    <property type="match status" value="1"/>
</dbReference>
<dbReference type="Gene3D" id="3.90.400.10">
    <property type="entry name" value="Oligo-1,6-glucosidase, Domain 2"/>
    <property type="match status" value="1"/>
</dbReference>
<dbReference type="InterPro" id="IPR017853">
    <property type="entry name" value="Glycoside_hydrolase_SF"/>
</dbReference>
<dbReference type="InterPro" id="IPR045857">
    <property type="entry name" value="O16G_dom_2"/>
</dbReference>
<dbReference type="PANTHER" id="PTHR38784">
    <property type="entry name" value="SUCROSE PHOSPHORYLASE"/>
    <property type="match status" value="1"/>
</dbReference>
<dbReference type="PANTHER" id="PTHR38784:SF1">
    <property type="entry name" value="SUCROSE PHOSPHORYLASE"/>
    <property type="match status" value="1"/>
</dbReference>
<dbReference type="SUPFAM" id="SSF51445">
    <property type="entry name" value="(Trans)glycosidases"/>
    <property type="match status" value="1"/>
</dbReference>
<keyword id="KW-0002">3D-structure</keyword>
<keyword id="KW-0119">Carbohydrate metabolism</keyword>
<keyword id="KW-0328">Glycosyltransferase</keyword>
<keyword id="KW-1185">Reference proteome</keyword>
<keyword id="KW-0808">Transferase</keyword>